<gene>
    <name type="primary">Clasp1</name>
    <name type="synonym">Kiaa0622</name>
</gene>
<name>CLAP1_MOUSE</name>
<proteinExistence type="evidence at protein level"/>
<protein>
    <recommendedName>
        <fullName>CLIP-associating protein 1</fullName>
    </recommendedName>
    <alternativeName>
        <fullName>Cytoplasmic linker-associated protein 1</fullName>
    </alternativeName>
</protein>
<organism>
    <name type="scientific">Mus musculus</name>
    <name type="common">Mouse</name>
    <dbReference type="NCBI Taxonomy" id="10090"/>
    <lineage>
        <taxon>Eukaryota</taxon>
        <taxon>Metazoa</taxon>
        <taxon>Chordata</taxon>
        <taxon>Craniata</taxon>
        <taxon>Vertebrata</taxon>
        <taxon>Euteleostomi</taxon>
        <taxon>Mammalia</taxon>
        <taxon>Eutheria</taxon>
        <taxon>Euarchontoglires</taxon>
        <taxon>Glires</taxon>
        <taxon>Rodentia</taxon>
        <taxon>Myomorpha</taxon>
        <taxon>Muroidea</taxon>
        <taxon>Muridae</taxon>
        <taxon>Murinae</taxon>
        <taxon>Mus</taxon>
        <taxon>Mus</taxon>
    </lineage>
</organism>
<dbReference type="EMBL" id="AC109294">
    <property type="status" value="NOT_ANNOTATED_CDS"/>
    <property type="molecule type" value="Genomic_DNA"/>
</dbReference>
<dbReference type="EMBL" id="AC131804">
    <property type="status" value="NOT_ANNOTATED_CDS"/>
    <property type="molecule type" value="Genomic_DNA"/>
</dbReference>
<dbReference type="EMBL" id="AC136636">
    <property type="status" value="NOT_ANNOTATED_CDS"/>
    <property type="molecule type" value="Genomic_DNA"/>
</dbReference>
<dbReference type="EMBL" id="AJ276962">
    <property type="protein sequence ID" value="CAC35162.1"/>
    <property type="molecule type" value="mRNA"/>
</dbReference>
<dbReference type="EMBL" id="AJ288061">
    <property type="protein sequence ID" value="CAC35163.1"/>
    <property type="molecule type" value="mRNA"/>
</dbReference>
<dbReference type="EMBL" id="AK006534">
    <property type="protein sequence ID" value="BAB24639.2"/>
    <property type="status" value="ALT_INIT"/>
    <property type="molecule type" value="mRNA"/>
</dbReference>
<dbReference type="EMBL" id="AK080782">
    <property type="protein sequence ID" value="BAC38020.1"/>
    <property type="status" value="ALT_SEQ"/>
    <property type="molecule type" value="mRNA"/>
</dbReference>
<dbReference type="EMBL" id="AK122330">
    <property type="protein sequence ID" value="BAC65612.1"/>
    <property type="molecule type" value="mRNA"/>
</dbReference>
<dbReference type="EMBL" id="BC057312">
    <property type="protein sequence ID" value="AAH57312.1"/>
    <property type="molecule type" value="mRNA"/>
</dbReference>
<dbReference type="EMBL" id="BC075708">
    <property type="protein sequence ID" value="AAH75708.1"/>
    <property type="molecule type" value="mRNA"/>
</dbReference>
<dbReference type="EMBL" id="BC094554">
    <property type="protein sequence ID" value="AAH94554.1"/>
    <property type="molecule type" value="mRNA"/>
</dbReference>
<dbReference type="RefSeq" id="NP_001280229.1">
    <property type="nucleotide sequence ID" value="NM_001293300.1"/>
</dbReference>
<dbReference type="RefSeq" id="NP_001280230.1">
    <property type="nucleotide sequence ID" value="NM_001293301.1"/>
</dbReference>
<dbReference type="RefSeq" id="NP_083985.2">
    <property type="nucleotide sequence ID" value="NM_029709.2"/>
</dbReference>
<dbReference type="SMR" id="Q80TV8"/>
<dbReference type="BioGRID" id="218270">
    <property type="interactions" value="36"/>
</dbReference>
<dbReference type="FunCoup" id="Q80TV8">
    <property type="interactions" value="2649"/>
</dbReference>
<dbReference type="IntAct" id="Q80TV8">
    <property type="interactions" value="11"/>
</dbReference>
<dbReference type="STRING" id="10090.ENSMUSP00000140167"/>
<dbReference type="GlyGen" id="Q80TV8">
    <property type="glycosylation" value="3 sites, 1 O-linked glycan (2 sites)"/>
</dbReference>
<dbReference type="iPTMnet" id="Q80TV8"/>
<dbReference type="PhosphoSitePlus" id="Q80TV8"/>
<dbReference type="SwissPalm" id="Q80TV8"/>
<dbReference type="jPOST" id="Q80TV8"/>
<dbReference type="PaxDb" id="10090-ENSMUSP00000140019"/>
<dbReference type="PeptideAtlas" id="Q80TV8"/>
<dbReference type="ProteomicsDB" id="285464">
    <molecule id="Q80TV8-1"/>
</dbReference>
<dbReference type="ProteomicsDB" id="285465">
    <molecule id="Q80TV8-2"/>
</dbReference>
<dbReference type="Pumba" id="Q80TV8"/>
<dbReference type="GeneID" id="76707"/>
<dbReference type="KEGG" id="mmu:76707"/>
<dbReference type="AGR" id="MGI:1923957"/>
<dbReference type="CTD" id="23332"/>
<dbReference type="MGI" id="MGI:1923957">
    <property type="gene designation" value="Clasp1"/>
</dbReference>
<dbReference type="eggNOG" id="KOG2956">
    <property type="taxonomic scope" value="Eukaryota"/>
</dbReference>
<dbReference type="InParanoid" id="Q80TV8"/>
<dbReference type="OrthoDB" id="46159at2759"/>
<dbReference type="PhylomeDB" id="Q80TV8"/>
<dbReference type="Reactome" id="R-MMU-141444">
    <property type="pathway name" value="Amplification of signal from unattached kinetochores via a MAD2 inhibitory signal"/>
</dbReference>
<dbReference type="Reactome" id="R-MMU-2467813">
    <property type="pathway name" value="Separation of Sister Chromatids"/>
</dbReference>
<dbReference type="Reactome" id="R-MMU-2500257">
    <property type="pathway name" value="Resolution of Sister Chromatid Cohesion"/>
</dbReference>
<dbReference type="Reactome" id="R-MMU-2565942">
    <property type="pathway name" value="Regulation of PLK1 Activity at G2/M Transition"/>
</dbReference>
<dbReference type="Reactome" id="R-MMU-380259">
    <property type="pathway name" value="Loss of Nlp from mitotic centrosomes"/>
</dbReference>
<dbReference type="Reactome" id="R-MMU-380270">
    <property type="pathway name" value="Recruitment of mitotic centrosome proteins and complexes"/>
</dbReference>
<dbReference type="Reactome" id="R-MMU-380284">
    <property type="pathway name" value="Loss of proteins required for interphase microtubule organization from the centrosome"/>
</dbReference>
<dbReference type="Reactome" id="R-MMU-380320">
    <property type="pathway name" value="Recruitment of NuMA to mitotic centrosomes"/>
</dbReference>
<dbReference type="Reactome" id="R-MMU-5620912">
    <property type="pathway name" value="Anchoring of the basal body to the plasma membrane"/>
</dbReference>
<dbReference type="Reactome" id="R-MMU-5663220">
    <property type="pathway name" value="RHO GTPases Activate Formins"/>
</dbReference>
<dbReference type="Reactome" id="R-MMU-68877">
    <property type="pathway name" value="Mitotic Prometaphase"/>
</dbReference>
<dbReference type="Reactome" id="R-MMU-8854518">
    <property type="pathway name" value="AURKA Activation by TPX2"/>
</dbReference>
<dbReference type="Reactome" id="R-MMU-9648025">
    <property type="pathway name" value="EML4 and NUDC in mitotic spindle formation"/>
</dbReference>
<dbReference type="BioGRID-ORCS" id="76707">
    <property type="hits" value="2 hits in 22 CRISPR screens"/>
</dbReference>
<dbReference type="CD-CODE" id="CE726F99">
    <property type="entry name" value="Postsynaptic density"/>
</dbReference>
<dbReference type="ChiTaRS" id="Clasp1">
    <property type="organism name" value="mouse"/>
</dbReference>
<dbReference type="PRO" id="PR:Q80TV8"/>
<dbReference type="Proteomes" id="UP000000589">
    <property type="component" value="Unplaced"/>
</dbReference>
<dbReference type="RNAct" id="Q80TV8">
    <property type="molecule type" value="protein"/>
</dbReference>
<dbReference type="GO" id="GO:0005938">
    <property type="term" value="C:cell cortex"/>
    <property type="evidence" value="ECO:0000266"/>
    <property type="project" value="MGI"/>
</dbReference>
<dbReference type="GO" id="GO:0005813">
    <property type="term" value="C:centrosome"/>
    <property type="evidence" value="ECO:0007669"/>
    <property type="project" value="UniProtKB-SubCell"/>
</dbReference>
<dbReference type="GO" id="GO:0005794">
    <property type="term" value="C:Golgi apparatus"/>
    <property type="evidence" value="ECO:0007669"/>
    <property type="project" value="UniProtKB-SubCell"/>
</dbReference>
<dbReference type="GO" id="GO:0000776">
    <property type="term" value="C:kinetochore"/>
    <property type="evidence" value="ECO:0007669"/>
    <property type="project" value="UniProtKB-KW"/>
</dbReference>
<dbReference type="GO" id="GO:0005874">
    <property type="term" value="C:microtubule"/>
    <property type="evidence" value="ECO:0007669"/>
    <property type="project" value="UniProtKB-KW"/>
</dbReference>
<dbReference type="GO" id="GO:0015630">
    <property type="term" value="C:microtubule cytoskeleton"/>
    <property type="evidence" value="ECO:0000314"/>
    <property type="project" value="MGI"/>
</dbReference>
<dbReference type="GO" id="GO:0005819">
    <property type="term" value="C:spindle"/>
    <property type="evidence" value="ECO:0007669"/>
    <property type="project" value="UniProtKB-SubCell"/>
</dbReference>
<dbReference type="GO" id="GO:0008017">
    <property type="term" value="F:microtubule binding"/>
    <property type="evidence" value="ECO:0000314"/>
    <property type="project" value="MGI"/>
</dbReference>
<dbReference type="GO" id="GO:0051301">
    <property type="term" value="P:cell division"/>
    <property type="evidence" value="ECO:0000266"/>
    <property type="project" value="MGI"/>
</dbReference>
<dbReference type="GO" id="GO:0016477">
    <property type="term" value="P:cell migration"/>
    <property type="evidence" value="ECO:0000316"/>
    <property type="project" value="MGI"/>
</dbReference>
<dbReference type="GO" id="GO:0030010">
    <property type="term" value="P:establishment of cell polarity"/>
    <property type="evidence" value="ECO:0000316"/>
    <property type="project" value="MGI"/>
</dbReference>
<dbReference type="GO" id="GO:0051294">
    <property type="term" value="P:establishment of spindle orientation"/>
    <property type="evidence" value="ECO:0000266"/>
    <property type="project" value="MGI"/>
</dbReference>
<dbReference type="GO" id="GO:0034453">
    <property type="term" value="P:microtubule anchoring"/>
    <property type="evidence" value="ECO:0000250"/>
    <property type="project" value="UniProtKB"/>
</dbReference>
<dbReference type="GO" id="GO:0007020">
    <property type="term" value="P:microtubule nucleation"/>
    <property type="evidence" value="ECO:0000250"/>
    <property type="project" value="UniProtKB"/>
</dbReference>
<dbReference type="GO" id="GO:0031023">
    <property type="term" value="P:microtubule organizing center organization"/>
    <property type="evidence" value="ECO:0000250"/>
    <property type="project" value="UniProtKB"/>
</dbReference>
<dbReference type="GO" id="GO:0007026">
    <property type="term" value="P:negative regulation of microtubule depolymerization"/>
    <property type="evidence" value="ECO:0000314"/>
    <property type="project" value="MGI"/>
</dbReference>
<dbReference type="FunFam" id="1.25.10.10:FF:000001">
    <property type="entry name" value="CLIP-associating protein 1 isoform 2"/>
    <property type="match status" value="1"/>
</dbReference>
<dbReference type="FunFam" id="1.25.10.10:FF:000005">
    <property type="entry name" value="CLIP-associating protein 1 isoform 2"/>
    <property type="match status" value="1"/>
</dbReference>
<dbReference type="FunFam" id="1.25.10.10:FF:000006">
    <property type="entry name" value="CLIP-associating protein 1 isoform 2"/>
    <property type="match status" value="1"/>
</dbReference>
<dbReference type="FunFam" id="1.25.10.10:FF:000031">
    <property type="entry name" value="CLIP-associating protein 1 isoform 2"/>
    <property type="match status" value="1"/>
</dbReference>
<dbReference type="Gene3D" id="1.25.10.10">
    <property type="entry name" value="Leucine-rich Repeat Variant"/>
    <property type="match status" value="4"/>
</dbReference>
<dbReference type="InterPro" id="IPR011989">
    <property type="entry name" value="ARM-like"/>
</dbReference>
<dbReference type="InterPro" id="IPR016024">
    <property type="entry name" value="ARM-type_fold"/>
</dbReference>
<dbReference type="InterPro" id="IPR024395">
    <property type="entry name" value="CLASP_N_dom"/>
</dbReference>
<dbReference type="InterPro" id="IPR021133">
    <property type="entry name" value="HEAT_type_2"/>
</dbReference>
<dbReference type="InterPro" id="IPR034085">
    <property type="entry name" value="TOG"/>
</dbReference>
<dbReference type="InterPro" id="IPR048491">
    <property type="entry name" value="XMAP215_CLASP_TOG"/>
</dbReference>
<dbReference type="PANTHER" id="PTHR21567">
    <property type="entry name" value="CLASP"/>
    <property type="match status" value="1"/>
</dbReference>
<dbReference type="PANTHER" id="PTHR21567:SF28">
    <property type="entry name" value="CLIP-ASSOCIATING PROTEIN 1"/>
    <property type="match status" value="1"/>
</dbReference>
<dbReference type="Pfam" id="PF21040">
    <property type="entry name" value="CEP104-like_TOG"/>
    <property type="match status" value="1"/>
</dbReference>
<dbReference type="Pfam" id="PF12348">
    <property type="entry name" value="CLASP_N"/>
    <property type="match status" value="1"/>
</dbReference>
<dbReference type="Pfam" id="PF21041">
    <property type="entry name" value="XMAP215_CLASP_TOG"/>
    <property type="match status" value="1"/>
</dbReference>
<dbReference type="SMART" id="SM01349">
    <property type="entry name" value="TOG"/>
    <property type="match status" value="4"/>
</dbReference>
<dbReference type="SUPFAM" id="SSF48371">
    <property type="entry name" value="ARM repeat"/>
    <property type="match status" value="2"/>
</dbReference>
<dbReference type="PROSITE" id="PS50077">
    <property type="entry name" value="HEAT_REPEAT"/>
    <property type="match status" value="1"/>
</dbReference>
<keyword id="KW-0025">Alternative splicing</keyword>
<keyword id="KW-0131">Cell cycle</keyword>
<keyword id="KW-0132">Cell division</keyword>
<keyword id="KW-0137">Centromere</keyword>
<keyword id="KW-0158">Chromosome</keyword>
<keyword id="KW-0175">Coiled coil</keyword>
<keyword id="KW-0963">Cytoplasm</keyword>
<keyword id="KW-0206">Cytoskeleton</keyword>
<keyword id="KW-0333">Golgi apparatus</keyword>
<keyword id="KW-0995">Kinetochore</keyword>
<keyword id="KW-0493">Microtubule</keyword>
<keyword id="KW-0498">Mitosis</keyword>
<keyword id="KW-0597">Phosphoprotein</keyword>
<keyword id="KW-1185">Reference proteome</keyword>
<keyword id="KW-0677">Repeat</keyword>
<feature type="chain" id="PRO_0000272274" description="CLIP-associating protein 1">
    <location>
        <begin position="1"/>
        <end position="1535"/>
    </location>
</feature>
<feature type="repeat" description="HEAT 1">
    <location>
        <begin position="87"/>
        <end position="124"/>
    </location>
</feature>
<feature type="repeat" description="HEAT 2">
    <location>
        <begin position="163"/>
        <end position="200"/>
    </location>
</feature>
<feature type="repeat" description="HEAT 3">
    <location>
        <begin position="405"/>
        <end position="440"/>
    </location>
</feature>
<feature type="repeat" description="HEAT 4">
    <location>
        <begin position="441"/>
        <end position="477"/>
    </location>
</feature>
<feature type="repeat" description="HEAT 5">
    <location>
        <begin position="971"/>
        <end position="1008"/>
    </location>
</feature>
<feature type="repeat" description="HEAT 6">
    <location>
        <begin position="1339"/>
        <end position="1376"/>
    </location>
</feature>
<feature type="repeat" description="HEAT 7">
    <location>
        <begin position="1457"/>
        <end position="1494"/>
    </location>
</feature>
<feature type="region of interest" description="Disordered" evidence="4">
    <location>
        <begin position="237"/>
        <end position="290"/>
    </location>
</feature>
<feature type="region of interest" description="Disordered" evidence="4">
    <location>
        <begin position="543"/>
        <end position="600"/>
    </location>
</feature>
<feature type="region of interest" description="Disordered" evidence="4">
    <location>
        <begin position="612"/>
        <end position="782"/>
    </location>
</feature>
<feature type="region of interest" description="Interaction with microtubules, MAPRE1 and MAPRE3" evidence="1">
    <location>
        <begin position="662"/>
        <end position="782"/>
    </location>
</feature>
<feature type="region of interest" description="Disordered" evidence="4">
    <location>
        <begin position="1078"/>
        <end position="1157"/>
    </location>
</feature>
<feature type="region of interest" description="Disordered" evidence="4">
    <location>
        <begin position="1200"/>
        <end position="1233"/>
    </location>
</feature>
<feature type="region of interest" description="Disordered" evidence="4">
    <location>
        <begin position="1245"/>
        <end position="1266"/>
    </location>
</feature>
<feature type="region of interest" description="Interaction with CLIP2 and RSN" evidence="5">
    <location>
        <begin position="1251"/>
        <end position="1535"/>
    </location>
</feature>
<feature type="region of interest" description="Interaction with PHLDB2" evidence="1">
    <location>
        <begin position="1251"/>
        <end position="1535"/>
    </location>
</feature>
<feature type="region of interest" description="Localization to kinetochores" evidence="1">
    <location>
        <begin position="1253"/>
        <end position="1535"/>
    </location>
</feature>
<feature type="coiled-coil region" evidence="3">
    <location>
        <begin position="1296"/>
        <end position="1327"/>
    </location>
</feature>
<feature type="compositionally biased region" description="Low complexity" evidence="4">
    <location>
        <begin position="252"/>
        <end position="266"/>
    </location>
</feature>
<feature type="compositionally biased region" description="Polar residues" evidence="4">
    <location>
        <begin position="267"/>
        <end position="279"/>
    </location>
</feature>
<feature type="compositionally biased region" description="Low complexity" evidence="4">
    <location>
        <begin position="280"/>
        <end position="290"/>
    </location>
</feature>
<feature type="compositionally biased region" description="Low complexity" evidence="4">
    <location>
        <begin position="548"/>
        <end position="567"/>
    </location>
</feature>
<feature type="compositionally biased region" description="Low complexity" evidence="4">
    <location>
        <begin position="579"/>
        <end position="594"/>
    </location>
</feature>
<feature type="compositionally biased region" description="Low complexity" evidence="4">
    <location>
        <begin position="612"/>
        <end position="633"/>
    </location>
</feature>
<feature type="compositionally biased region" description="Polar residues" evidence="4">
    <location>
        <begin position="645"/>
        <end position="658"/>
    </location>
</feature>
<feature type="compositionally biased region" description="Low complexity" evidence="4">
    <location>
        <begin position="673"/>
        <end position="695"/>
    </location>
</feature>
<feature type="compositionally biased region" description="Polar residues" evidence="4">
    <location>
        <begin position="721"/>
        <end position="730"/>
    </location>
</feature>
<feature type="compositionally biased region" description="Polar residues" evidence="4">
    <location>
        <begin position="1079"/>
        <end position="1094"/>
    </location>
</feature>
<feature type="compositionally biased region" description="Low complexity" evidence="4">
    <location>
        <begin position="1103"/>
        <end position="1112"/>
    </location>
</feature>
<feature type="compositionally biased region" description="Basic and acidic residues" evidence="4">
    <location>
        <begin position="1200"/>
        <end position="1213"/>
    </location>
</feature>
<feature type="modified residue" description="Phosphoserine" evidence="11">
    <location>
        <position position="246"/>
    </location>
</feature>
<feature type="modified residue" description="Phosphoserine" evidence="11">
    <location>
        <position position="545"/>
    </location>
</feature>
<feature type="modified residue" description="Phosphoserine" evidence="11">
    <location>
        <position position="548"/>
    </location>
</feature>
<feature type="modified residue" description="Phosphoserine" evidence="2">
    <location>
        <position position="558"/>
    </location>
</feature>
<feature type="modified residue" description="Phosphoserine" evidence="2">
    <location>
        <position position="559"/>
    </location>
</feature>
<feature type="modified residue" description="Phosphoserine" evidence="2">
    <location>
        <position position="568"/>
    </location>
</feature>
<feature type="modified residue" description="Phosphoserine" evidence="11">
    <location>
        <position position="600"/>
    </location>
</feature>
<feature type="modified residue" description="Phosphoserine" evidence="11">
    <location>
        <position position="636"/>
    </location>
</feature>
<feature type="modified residue" description="Phosphoserine" evidence="2">
    <location>
        <position position="646"/>
    </location>
</feature>
<feature type="modified residue" description="Phosphoserine" evidence="2">
    <location>
        <position position="647"/>
    </location>
</feature>
<feature type="modified residue" description="Phosphoserine" evidence="2">
    <location>
        <position position="649"/>
    </location>
</feature>
<feature type="modified residue" description="Phosphothreonine" evidence="2">
    <location>
        <position position="656"/>
    </location>
</feature>
<feature type="modified residue" description="Phosphoserine" evidence="2">
    <location>
        <position position="684"/>
    </location>
</feature>
<feature type="modified residue" description="Phosphoserine" evidence="11">
    <location>
        <position position="688"/>
    </location>
</feature>
<feature type="modified residue" description="Phosphoserine" evidence="2">
    <location>
        <position position="695"/>
    </location>
</feature>
<feature type="modified residue" description="Phosphoserine" evidence="2">
    <location>
        <position position="702"/>
    </location>
</feature>
<feature type="modified residue" description="Phosphothreonine" evidence="2">
    <location>
        <position position="708"/>
    </location>
</feature>
<feature type="modified residue" description="Phosphoserine" evidence="2">
    <location>
        <position position="711"/>
    </location>
</feature>
<feature type="modified residue" description="Phosphoserine" evidence="2">
    <location>
        <position position="784"/>
    </location>
</feature>
<feature type="modified residue" description="Phosphoserine" evidence="2">
    <location>
        <position position="794"/>
    </location>
</feature>
<feature type="modified residue" description="Phosphoserine" evidence="11">
    <location>
        <position position="820"/>
    </location>
</feature>
<feature type="modified residue" description="Phosphoserine" evidence="11">
    <location>
        <position position="1088"/>
    </location>
</feature>
<feature type="modified residue" description="Phosphothreonine" evidence="11">
    <location>
        <position position="1092"/>
    </location>
</feature>
<feature type="modified residue" description="Phosphothreonine" evidence="2">
    <location>
        <position position="1096"/>
    </location>
</feature>
<feature type="modified residue" description="Phosphoserine" evidence="11">
    <location>
        <position position="1110"/>
    </location>
</feature>
<feature type="modified residue" description="Phosphoserine" evidence="2">
    <location>
        <position position="1193"/>
    </location>
</feature>
<feature type="modified residue" description="Phosphoserine" evidence="10">
    <location>
        <position position="1220"/>
    </location>
</feature>
<feature type="splice variant" id="VSP_022390" description="In isoform 2." evidence="7 8">
    <original>L</original>
    <variation>LASRRHSRSTSALSTAESVGQS</variation>
    <location>
        <position position="770"/>
    </location>
</feature>
<feature type="splice variant" id="VSP_022391" description="In isoform 2." evidence="7 8">
    <original>L</original>
    <variation>LLLGDARSK</variation>
    <location>
        <position position="805"/>
    </location>
</feature>
<feature type="splice variant" id="VSP_022392" description="In isoform 2." evidence="7 8">
    <location>
        <begin position="1120"/>
        <end position="1158"/>
    </location>
</feature>
<feature type="sequence conflict" description="In Ref. 3; BAB24639." evidence="9" ref="3">
    <original>I</original>
    <variation>K</variation>
    <location>
        <position position="1231"/>
    </location>
</feature>
<feature type="sequence conflict" description="In Ref. 5; AAH75708." evidence="9" ref="5">
    <original>P</original>
    <variation>S</variation>
    <location>
        <position position="1417"/>
    </location>
</feature>
<feature type="modified residue" description="Phosphoserine" evidence="11">
    <location sequence="Q80TV8-2">
        <position position="1139"/>
    </location>
</feature>
<evidence type="ECO:0000250" key="1"/>
<evidence type="ECO:0000250" key="2">
    <source>
        <dbReference type="UniProtKB" id="Q7Z460"/>
    </source>
</evidence>
<evidence type="ECO:0000255" key="3"/>
<evidence type="ECO:0000256" key="4">
    <source>
        <dbReference type="SAM" id="MobiDB-lite"/>
    </source>
</evidence>
<evidence type="ECO:0000269" key="5">
    <source>
    </source>
</evidence>
<evidence type="ECO:0000269" key="6">
    <source>
    </source>
</evidence>
<evidence type="ECO:0000303" key="7">
    <source>
    </source>
</evidence>
<evidence type="ECO:0000303" key="8">
    <source>
    </source>
</evidence>
<evidence type="ECO:0000305" key="9"/>
<evidence type="ECO:0007744" key="10">
    <source>
    </source>
</evidence>
<evidence type="ECO:0007744" key="11">
    <source>
    </source>
</evidence>
<sequence length="1535" mass="169227">MEPRMESCLAQVLQKDVGKRLQVGQELIDYFSDRQKSADLEHDQTLLDKLVDGLATSWVNSSNYKVVLLGMDILSALVTRLQDRFKAQIGTVLPSLIDRLGDAKDSVREQDQTLLLKIMDQAANPQYVWDRMLGGFKHKNFRTREGICLCLIATLNASGAQTLTLSKIVPHICNLLGDPNSQVRDAAINSLVEIYRHVGERVRADLSKKGLPQSRLNVIFTKFDEVQKSGNMIQSANEKNFDDEDSVDGNRPSSASSSSSKAPSSSRRNVNLGTTRRLMSSSLGSKSSAAKEGAGAVDEEDFIKAFDDVPVVQIYSSRDLEESINKIREILSDDKHDWEQRVNALKKIRSLLLAGAAEYDNFFQHLRLLDGAFKLSAKDLRSQVVREACITLGHLSSVLGNKFDHGAEAIMPTIFNLIPNSAKIMATSGVVAVRLIIRHTHIPRLIPVITSNCTSKSVAVRRRCFEFLDLLLQEWQTHSLERHISVLAETIKKGIHDADSEARIEARKCYWGFHSHFSREAEHLYHTLESSYQKALQSHLKNSDSIVSLPQSDRSSSSSQESLNRPLSAKRSPTGSTASRGSTVSTKSVSTTGSLQRSRSDIDVNAAASAKSKVSSSSGSPAFSSAAALPPGSYASLGRIRTRRQSSGSTTNVASTPDSRGRSRAKVVSQSQRSRSANPAGAGSRSSSPGKLLGSGLAGGSSRGPPVTPSSEKRSKIPRSQGCSRETSPNRIGLARSSRIPRPSMSQGCSRDTSRESSRDTSPARGFTPLDRFGLGQSGRIPGSVNAMRVLSTSTDLEAAVADALKKPVRRRYEPYGMYSDDDANSDASSVCSERSYGSRNGGIPHYLRQTEDVAEVLNHCASSNWSERKEGLLGLQNLLKSQRTLSRVELKRLCEIFTRMFADPHSKRVFSMFLETLVDFIIIHKDDLQDWLFVLLTQLLKKMGADLLGSVQAKVQKALDVTRDSFPFDQQFNILMRFIVDQTQTPNLKVKVAILKYIESLARQMDPTDFVNSSETRLAVSRIITWTTEPKSSDVRKAAQIVLISLFELNTPEFTMLLGALPKTFQDGATKLLHNHLKNSSNTGVGSPSNTIGRTPSRHPSSRTSPLTSPTNCSHGGLSPSRLWGWSADGLSKPPPPFSQPNSIPTAPSHKTLRRSYSPSMLDYDTENLNSEEIYSSLRGVTEAIEKFSFRSQEDLNEPIKRDGKKDCDIVSRDGGAASPATEGRGGSEIEGGRMALDNKTSLLNTQPPRAFPGPRAREYNPYPYSDTINTYDKTALKEAVFDDDMEQLRDVPIDHSDLVADLLKELSNHNERVEERKGALLELLKITREDSLGVWEEHFKTILLLLLETLGDKDHSIRALALRVLREILRNQPARFKNYAELTIMKTLEAHKDSHKEVVRAAEEAASTLASSIHPEQCIKVLCPIIQTADYPINLAAIKMQTKVVERITKESLLQLLVDIIPGLLQGYDNTESSVRKASVFCLVAIYSVIGEDLKPHLAQLTGSKMKLLNLYIKRAQTTNSNSSSSSDVSTHS</sequence>
<reference key="1">
    <citation type="journal article" date="2009" name="PLoS Biol.">
        <title>Lineage-specific biology revealed by a finished genome assembly of the mouse.</title>
        <authorList>
            <person name="Church D.M."/>
            <person name="Goodstadt L."/>
            <person name="Hillier L.W."/>
            <person name="Zody M.C."/>
            <person name="Goldstein S."/>
            <person name="She X."/>
            <person name="Bult C.J."/>
            <person name="Agarwala R."/>
            <person name="Cherry J.L."/>
            <person name="DiCuccio M."/>
            <person name="Hlavina W."/>
            <person name="Kapustin Y."/>
            <person name="Meric P."/>
            <person name="Maglott D."/>
            <person name="Birtle Z."/>
            <person name="Marques A.C."/>
            <person name="Graves T."/>
            <person name="Zhou S."/>
            <person name="Teague B."/>
            <person name="Potamousis K."/>
            <person name="Churas C."/>
            <person name="Place M."/>
            <person name="Herschleb J."/>
            <person name="Runnheim R."/>
            <person name="Forrest D."/>
            <person name="Amos-Landgraf J."/>
            <person name="Schwartz D.C."/>
            <person name="Cheng Z."/>
            <person name="Lindblad-Toh K."/>
            <person name="Eichler E.E."/>
            <person name="Ponting C.P."/>
        </authorList>
    </citation>
    <scope>NUCLEOTIDE SEQUENCE [LARGE SCALE GENOMIC DNA]</scope>
    <source>
        <strain>C57BL/6J</strain>
    </source>
</reference>
<reference key="2">
    <citation type="journal article" date="2001" name="Cell">
        <title>Clasps are CLIP-115 and -170 associating proteins involved in the regional regulation of microtubule dynamics in motile fibroblasts.</title>
        <authorList>
            <person name="Akhmanova A."/>
            <person name="Hoogenraad C.C."/>
            <person name="Drabek K."/>
            <person name="Stepanova T."/>
            <person name="Dortland B."/>
            <person name="Verkerk T."/>
            <person name="Vermeulen W."/>
            <person name="Burgering B.M."/>
            <person name="de Zeeuw C.I."/>
            <person name="Grosveld F."/>
            <person name="Galjart N."/>
        </authorList>
    </citation>
    <scope>NUCLEOTIDE SEQUENCE [MRNA] OF 1-306 (ISOFORMS 1/2)</scope>
    <scope>NUCLEOTIDE SEQUENCE [MRNA] OF 1251-1535 (ISOFORMS 1/2)</scope>
    <scope>INTERACTION WITH CLIP2 AND RSN</scope>
    <scope>TISSUE SPECIFICITY</scope>
    <source>
        <tissue>Brain</tissue>
    </source>
</reference>
<reference key="3">
    <citation type="journal article" date="2005" name="Science">
        <title>The transcriptional landscape of the mammalian genome.</title>
        <authorList>
            <person name="Carninci P."/>
            <person name="Kasukawa T."/>
            <person name="Katayama S."/>
            <person name="Gough J."/>
            <person name="Frith M.C."/>
            <person name="Maeda N."/>
            <person name="Oyama R."/>
            <person name="Ravasi T."/>
            <person name="Lenhard B."/>
            <person name="Wells C."/>
            <person name="Kodzius R."/>
            <person name="Shimokawa K."/>
            <person name="Bajic V.B."/>
            <person name="Brenner S.E."/>
            <person name="Batalov S."/>
            <person name="Forrest A.R."/>
            <person name="Zavolan M."/>
            <person name="Davis M.J."/>
            <person name="Wilming L.G."/>
            <person name="Aidinis V."/>
            <person name="Allen J.E."/>
            <person name="Ambesi-Impiombato A."/>
            <person name="Apweiler R."/>
            <person name="Aturaliya R.N."/>
            <person name="Bailey T.L."/>
            <person name="Bansal M."/>
            <person name="Baxter L."/>
            <person name="Beisel K.W."/>
            <person name="Bersano T."/>
            <person name="Bono H."/>
            <person name="Chalk A.M."/>
            <person name="Chiu K.P."/>
            <person name="Choudhary V."/>
            <person name="Christoffels A."/>
            <person name="Clutterbuck D.R."/>
            <person name="Crowe M.L."/>
            <person name="Dalla E."/>
            <person name="Dalrymple B.P."/>
            <person name="de Bono B."/>
            <person name="Della Gatta G."/>
            <person name="di Bernardo D."/>
            <person name="Down T."/>
            <person name="Engstrom P."/>
            <person name="Fagiolini M."/>
            <person name="Faulkner G."/>
            <person name="Fletcher C.F."/>
            <person name="Fukushima T."/>
            <person name="Furuno M."/>
            <person name="Futaki S."/>
            <person name="Gariboldi M."/>
            <person name="Georgii-Hemming P."/>
            <person name="Gingeras T.R."/>
            <person name="Gojobori T."/>
            <person name="Green R.E."/>
            <person name="Gustincich S."/>
            <person name="Harbers M."/>
            <person name="Hayashi Y."/>
            <person name="Hensch T.K."/>
            <person name="Hirokawa N."/>
            <person name="Hill D."/>
            <person name="Huminiecki L."/>
            <person name="Iacono M."/>
            <person name="Ikeo K."/>
            <person name="Iwama A."/>
            <person name="Ishikawa T."/>
            <person name="Jakt M."/>
            <person name="Kanapin A."/>
            <person name="Katoh M."/>
            <person name="Kawasawa Y."/>
            <person name="Kelso J."/>
            <person name="Kitamura H."/>
            <person name="Kitano H."/>
            <person name="Kollias G."/>
            <person name="Krishnan S.P."/>
            <person name="Kruger A."/>
            <person name="Kummerfeld S.K."/>
            <person name="Kurochkin I.V."/>
            <person name="Lareau L.F."/>
            <person name="Lazarevic D."/>
            <person name="Lipovich L."/>
            <person name="Liu J."/>
            <person name="Liuni S."/>
            <person name="McWilliam S."/>
            <person name="Madan Babu M."/>
            <person name="Madera M."/>
            <person name="Marchionni L."/>
            <person name="Matsuda H."/>
            <person name="Matsuzawa S."/>
            <person name="Miki H."/>
            <person name="Mignone F."/>
            <person name="Miyake S."/>
            <person name="Morris K."/>
            <person name="Mottagui-Tabar S."/>
            <person name="Mulder N."/>
            <person name="Nakano N."/>
            <person name="Nakauchi H."/>
            <person name="Ng P."/>
            <person name="Nilsson R."/>
            <person name="Nishiguchi S."/>
            <person name="Nishikawa S."/>
            <person name="Nori F."/>
            <person name="Ohara O."/>
            <person name="Okazaki Y."/>
            <person name="Orlando V."/>
            <person name="Pang K.C."/>
            <person name="Pavan W.J."/>
            <person name="Pavesi G."/>
            <person name="Pesole G."/>
            <person name="Petrovsky N."/>
            <person name="Piazza S."/>
            <person name="Reed J."/>
            <person name="Reid J.F."/>
            <person name="Ring B.Z."/>
            <person name="Ringwald M."/>
            <person name="Rost B."/>
            <person name="Ruan Y."/>
            <person name="Salzberg S.L."/>
            <person name="Sandelin A."/>
            <person name="Schneider C."/>
            <person name="Schoenbach C."/>
            <person name="Sekiguchi K."/>
            <person name="Semple C.A."/>
            <person name="Seno S."/>
            <person name="Sessa L."/>
            <person name="Sheng Y."/>
            <person name="Shibata Y."/>
            <person name="Shimada H."/>
            <person name="Shimada K."/>
            <person name="Silva D."/>
            <person name="Sinclair B."/>
            <person name="Sperling S."/>
            <person name="Stupka E."/>
            <person name="Sugiura K."/>
            <person name="Sultana R."/>
            <person name="Takenaka Y."/>
            <person name="Taki K."/>
            <person name="Tammoja K."/>
            <person name="Tan S.L."/>
            <person name="Tang S."/>
            <person name="Taylor M.S."/>
            <person name="Tegner J."/>
            <person name="Teichmann S.A."/>
            <person name="Ueda H.R."/>
            <person name="van Nimwegen E."/>
            <person name="Verardo R."/>
            <person name="Wei C.L."/>
            <person name="Yagi K."/>
            <person name="Yamanishi H."/>
            <person name="Zabarovsky E."/>
            <person name="Zhu S."/>
            <person name="Zimmer A."/>
            <person name="Hide W."/>
            <person name="Bult C."/>
            <person name="Grimmond S.M."/>
            <person name="Teasdale R.D."/>
            <person name="Liu E.T."/>
            <person name="Brusic V."/>
            <person name="Quackenbush J."/>
            <person name="Wahlestedt C."/>
            <person name="Mattick J.S."/>
            <person name="Hume D.A."/>
            <person name="Kai C."/>
            <person name="Sasaki D."/>
            <person name="Tomaru Y."/>
            <person name="Fukuda S."/>
            <person name="Kanamori-Katayama M."/>
            <person name="Suzuki M."/>
            <person name="Aoki J."/>
            <person name="Arakawa T."/>
            <person name="Iida J."/>
            <person name="Imamura K."/>
            <person name="Itoh M."/>
            <person name="Kato T."/>
            <person name="Kawaji H."/>
            <person name="Kawagashira N."/>
            <person name="Kawashima T."/>
            <person name="Kojima M."/>
            <person name="Kondo S."/>
            <person name="Konno H."/>
            <person name="Nakano K."/>
            <person name="Ninomiya N."/>
            <person name="Nishio T."/>
            <person name="Okada M."/>
            <person name="Plessy C."/>
            <person name="Shibata K."/>
            <person name="Shiraki T."/>
            <person name="Suzuki S."/>
            <person name="Tagami M."/>
            <person name="Waki K."/>
            <person name="Watahiki A."/>
            <person name="Okamura-Oho Y."/>
            <person name="Suzuki H."/>
            <person name="Kawai J."/>
            <person name="Hayashizaki Y."/>
        </authorList>
    </citation>
    <scope>NUCLEOTIDE SEQUENCE [LARGE SCALE MRNA] OF 1-393 (ISOFORMS 1/2)</scope>
    <scope>NUCLEOTIDE SEQUENCE [LARGE SCALE MRNA] OF 1187-1535 (ISOFORMS 1/2)</scope>
    <source>
        <strain>C57BL/6J</strain>
        <tissue>Embryo</tissue>
        <tissue>Testis</tissue>
    </source>
</reference>
<reference key="4">
    <citation type="journal article" date="2003" name="DNA Res.">
        <title>Prediction of the coding sequences of mouse homologues of KIAA gene: II. The complete nucleotide sequences of 400 mouse KIAA-homologous cDNAs identified by screening of terminal sequences of cDNA clones randomly sampled from size-fractionated libraries.</title>
        <authorList>
            <person name="Okazaki N."/>
            <person name="Kikuno R."/>
            <person name="Ohara R."/>
            <person name="Inamoto S."/>
            <person name="Aizawa H."/>
            <person name="Yuasa S."/>
            <person name="Nakajima D."/>
            <person name="Nagase T."/>
            <person name="Ohara O."/>
            <person name="Koga H."/>
        </authorList>
    </citation>
    <scope>NUCLEOTIDE SEQUENCE [LARGE SCALE MRNA] OF 735-1535 (ISOFORM 2)</scope>
    <source>
        <tissue>Brain</tissue>
    </source>
</reference>
<reference key="5">
    <citation type="journal article" date="2004" name="Genome Res.">
        <title>The status, quality, and expansion of the NIH full-length cDNA project: the Mammalian Gene Collection (MGC).</title>
        <authorList>
            <consortium name="The MGC Project Team"/>
        </authorList>
    </citation>
    <scope>NUCLEOTIDE SEQUENCE [LARGE SCALE MRNA] OF 985-1535 (ISOFORM 1)</scope>
    <scope>NUCLEOTIDE SEQUENCE [LARGE SCALE MRNA] OF 997-1535 (ISOFORM 2)</scope>
    <source>
        <strain>C57BL/6J</strain>
        <strain>FVB/N</strain>
        <tissue>Brain</tissue>
        <tissue>Salivary gland</tissue>
    </source>
</reference>
<reference key="6">
    <citation type="journal article" date="2004" name="Mol. Cell. Proteomics">
        <title>Phosphoproteomic analysis of the developing mouse brain.</title>
        <authorList>
            <person name="Ballif B.A."/>
            <person name="Villen J."/>
            <person name="Beausoleil S.A."/>
            <person name="Schwartz D."/>
            <person name="Gygi S.P."/>
        </authorList>
    </citation>
    <scope>IDENTIFICATION BY MASS SPECTROMETRY [LARGE SCALE ANALYSIS]</scope>
    <source>
        <tissue>Embryonic brain</tissue>
    </source>
</reference>
<reference key="7">
    <citation type="journal article" date="2006" name="Mol. Cell. Proteomics">
        <title>Comprehensive identification of phosphorylation sites in postsynaptic density preparations.</title>
        <authorList>
            <person name="Trinidad J.C."/>
            <person name="Specht C.G."/>
            <person name="Thalhammer A."/>
            <person name="Schoepfer R."/>
            <person name="Burlingame A.L."/>
        </authorList>
    </citation>
    <scope>PHOSPHORYLATION [LARGE SCALE ANALYSIS] AT SER-1220</scope>
    <scope>IDENTIFICATION BY MASS SPECTROMETRY [LARGE SCALE ANALYSIS]</scope>
    <source>
        <tissue>Brain</tissue>
    </source>
</reference>
<reference key="8">
    <citation type="journal article" date="2008" name="Cell">
        <title>ACF7 regulates cytoskeletal-focal adhesion dynamics and migration and has ATPase activity.</title>
        <authorList>
            <person name="Wu X."/>
            <person name="Kodama A."/>
            <person name="Fuchs E."/>
        </authorList>
    </citation>
    <scope>INTERACTION WITH MACF1</scope>
</reference>
<reference key="9">
    <citation type="journal article" date="2010" name="Cell">
        <title>A tissue-specific atlas of mouse protein phosphorylation and expression.</title>
        <authorList>
            <person name="Huttlin E.L."/>
            <person name="Jedrychowski M.P."/>
            <person name="Elias J.E."/>
            <person name="Goswami T."/>
            <person name="Rad R."/>
            <person name="Beausoleil S.A."/>
            <person name="Villen J."/>
            <person name="Haas W."/>
            <person name="Sowa M.E."/>
            <person name="Gygi S.P."/>
        </authorList>
    </citation>
    <scope>PHOSPHORYLATION [LARGE SCALE ANALYSIS] AT SER-246; SER-545; SER-548; SER-600; SER-636; SER-688; SER-820; SER-1088; THR-1092 AND SER-1110</scope>
    <scope>PHOSPHORYLATION [LARGE SCALE ANALYSIS] AT SER-1139 (ISOFORM 2)</scope>
    <scope>IDENTIFICATION BY MASS SPECTROMETRY [LARGE SCALE ANALYSIS]</scope>
    <source>
        <tissue>Brain</tissue>
        <tissue>Brown adipose tissue</tissue>
        <tissue>Heart</tissue>
        <tissue>Kidney</tissue>
        <tissue>Liver</tissue>
        <tissue>Lung</tissue>
        <tissue>Pancreas</tissue>
        <tissue>Spleen</tissue>
        <tissue>Testis</tissue>
    </source>
</reference>
<comment type="function">
    <text evidence="1">Microtubule plus-end tracking protein that promotes the stabilization of dynamic microtubules. Involved in the nucleation of noncentrosomal microtubules originating from the trans-Golgi network (TGN). Required for the polarization of the cytoplasmic microtubule arrays in migrating cells towards the leading edge of the cell. May act at the cell cortex to enhance the frequency of rescue of depolymerizing microtubules by attaching their plus-ends to cortical platforms composed of ERC1 and PHLDB2. This cortical microtubule stabilizing activity is regulated at least in part by phosphatidylinositol 3-kinase signaling. Also performs a similar stabilizing function at the kinetochore which is essential for the bipolar alignment of chromosomes on the mitotic spindle (By similarity).</text>
</comment>
<comment type="subunit">
    <text evidence="2 5 6">Interacts with ERC1, MAPRE1, MAPRE3, microtubules, and PHLDB2. The interaction with ERC1 may be mediated by PHLDB2. Interacts with GCC2; recruits CLASP1 to Golgi membranes (By similarity). Interacts with CLIP2 and RSN (PubMed:11290329). Interacts with MACF1 (PubMed:18854161). Interacts with mtcl2 and MTCL1 (By similarity).</text>
</comment>
<comment type="interaction">
    <interactant intactId="EBI-908322">
        <id>Q80TV8</id>
    </interactant>
    <interactant intactId="EBI-349416">
        <id>O55156</id>
        <label>Clip2</label>
    </interactant>
    <organismsDiffer>true</organismsDiffer>
    <experiments>3</experiments>
</comment>
<comment type="subcellular location">
    <subcellularLocation>
        <location evidence="1">Cytoplasm</location>
        <location evidence="1">Cytoskeleton</location>
    </subcellularLocation>
    <subcellularLocation>
        <location evidence="1">Cytoplasm</location>
        <location evidence="1">Cytoskeleton</location>
        <location evidence="1">Microtubule organizing center</location>
        <location evidence="1">Centrosome</location>
    </subcellularLocation>
    <subcellularLocation>
        <location evidence="1">Chromosome</location>
        <location evidence="1">Centromere</location>
        <location evidence="1">Kinetochore</location>
    </subcellularLocation>
    <subcellularLocation>
        <location evidence="1">Cytoplasm</location>
        <location evidence="1">Cytoskeleton</location>
        <location evidence="1">Spindle</location>
    </subcellularLocation>
    <subcellularLocation>
        <location evidence="1">Golgi apparatus</location>
        <location evidence="1">trans-Golgi network</location>
    </subcellularLocation>
    <text evidence="1">Localizes to microtubule plus ends. Localizes to centrosomes, kinetochores and the mitotic spindle from prometaphase. Subsequently localizes to the spindle midzone from anaphase and to the midbody from telophase. In migrating cells localizes to the plus ends of microtubules within the cell body and to the entire microtubule lattice within the lamella. Localizes to the cell cortex and this requires ERC1 and PHLDB2.</text>
</comment>
<comment type="alternative products">
    <event type="alternative splicing"/>
    <isoform>
        <id>Q80TV8-1</id>
        <name>1</name>
        <sequence type="displayed"/>
    </isoform>
    <isoform>
        <id>Q80TV8-2</id>
        <name>2</name>
        <sequence type="described" ref="VSP_022390 VSP_022391 VSP_022392"/>
    </isoform>
</comment>
<comment type="tissue specificity">
    <text evidence="5">Highly expressed in brain and heart and at lower levels in kidney, lung, skeletal muscle and testis.</text>
</comment>
<comment type="similarity">
    <text evidence="9">Belongs to the CLASP family.</text>
</comment>
<comment type="sequence caution" evidence="9">
    <conflict type="erroneous initiation">
        <sequence resource="EMBL-CDS" id="BAB24639"/>
    </conflict>
    <text>Truncated N-terminus.</text>
</comment>
<comment type="sequence caution" evidence="9">
    <conflict type="miscellaneous discrepancy">
        <sequence resource="EMBL-CDS" id="BAC38020"/>
    </conflict>
    <text>Intron retention.</text>
</comment>
<accession>Q80TV8</accession>
<accession>Q505G6</accession>
<accession>Q6DI75</accession>
<accession>Q6PG14</accession>
<accession>Q8BNS4</accession>
<accession>Q99JH5</accession>
<accession>Q99JI2</accession>
<accession>Q9CVU1</accession>